<dbReference type="EMBL" id="AL111168">
    <property type="protein sequence ID" value="CAL35041.1"/>
    <property type="molecule type" value="Genomic_DNA"/>
</dbReference>
<dbReference type="PIR" id="A48518">
    <property type="entry name" value="A48518"/>
</dbReference>
<dbReference type="RefSeq" id="WP_002853252.1">
    <property type="nucleotide sequence ID" value="NZ_SZUC01000001.1"/>
</dbReference>
<dbReference type="RefSeq" id="YP_002344319.1">
    <property type="nucleotide sequence ID" value="NC_002163.1"/>
</dbReference>
<dbReference type="PDB" id="2V25">
    <property type="method" value="X-ray"/>
    <property type="resolution" value="1.49 A"/>
    <property type="chains" value="A/B=1-259"/>
</dbReference>
<dbReference type="PDBsum" id="2V25"/>
<dbReference type="SMR" id="Q0P9X8"/>
<dbReference type="IntAct" id="Q0P9X8">
    <property type="interactions" value="90"/>
</dbReference>
<dbReference type="STRING" id="192222.Cj0921c"/>
<dbReference type="TCDB" id="3.A.1.3.16">
    <property type="family name" value="the atp-binding cassette (abc) superfamily"/>
</dbReference>
<dbReference type="PaxDb" id="192222-Cj0921c"/>
<dbReference type="EnsemblBacteria" id="CAL35041">
    <property type="protein sequence ID" value="CAL35041"/>
    <property type="gene ID" value="Cj0921c"/>
</dbReference>
<dbReference type="GeneID" id="906008"/>
<dbReference type="KEGG" id="cje:Cj0921c"/>
<dbReference type="PATRIC" id="fig|192222.6.peg.905"/>
<dbReference type="eggNOG" id="COG0834">
    <property type="taxonomic scope" value="Bacteria"/>
</dbReference>
<dbReference type="HOGENOM" id="CLU_019602_18_4_7"/>
<dbReference type="OrthoDB" id="9777941at2"/>
<dbReference type="EvolutionaryTrace" id="Q0P9X8"/>
<dbReference type="PRO" id="PR:Q0P9X8"/>
<dbReference type="Proteomes" id="UP000000799">
    <property type="component" value="Chromosome"/>
</dbReference>
<dbReference type="GO" id="GO:0009986">
    <property type="term" value="C:cell surface"/>
    <property type="evidence" value="ECO:0007669"/>
    <property type="project" value="UniProtKB-SubCell"/>
</dbReference>
<dbReference type="GO" id="GO:0005576">
    <property type="term" value="C:extracellular region"/>
    <property type="evidence" value="ECO:0007669"/>
    <property type="project" value="TreeGrafter"/>
</dbReference>
<dbReference type="GO" id="GO:0030288">
    <property type="term" value="C:outer membrane-bounded periplasmic space"/>
    <property type="evidence" value="ECO:0007669"/>
    <property type="project" value="TreeGrafter"/>
</dbReference>
<dbReference type="GO" id="GO:0006865">
    <property type="term" value="P:amino acid transport"/>
    <property type="evidence" value="ECO:0007669"/>
    <property type="project" value="TreeGrafter"/>
</dbReference>
<dbReference type="CDD" id="cd13691">
    <property type="entry name" value="PBP2_Peb1a_like"/>
    <property type="match status" value="1"/>
</dbReference>
<dbReference type="Gene3D" id="3.40.190.10">
    <property type="entry name" value="Periplasmic binding protein-like II"/>
    <property type="match status" value="2"/>
</dbReference>
<dbReference type="InterPro" id="IPR051455">
    <property type="entry name" value="Bact_solute-bind_prot3"/>
</dbReference>
<dbReference type="InterPro" id="IPR018313">
    <property type="entry name" value="SBP_3_CS"/>
</dbReference>
<dbReference type="InterPro" id="IPR001638">
    <property type="entry name" value="Solute-binding_3/MltF_N"/>
</dbReference>
<dbReference type="NCBIfam" id="NF008885">
    <property type="entry name" value="PRK11917.1"/>
    <property type="match status" value="1"/>
</dbReference>
<dbReference type="PANTHER" id="PTHR30085:SF6">
    <property type="entry name" value="ABC TRANSPORTER GLUTAMINE-BINDING PROTEIN GLNH"/>
    <property type="match status" value="1"/>
</dbReference>
<dbReference type="PANTHER" id="PTHR30085">
    <property type="entry name" value="AMINO ACID ABC TRANSPORTER PERMEASE"/>
    <property type="match status" value="1"/>
</dbReference>
<dbReference type="Pfam" id="PF00497">
    <property type="entry name" value="SBP_bac_3"/>
    <property type="match status" value="1"/>
</dbReference>
<dbReference type="SMART" id="SM00062">
    <property type="entry name" value="PBPb"/>
    <property type="match status" value="1"/>
</dbReference>
<dbReference type="SUPFAM" id="SSF53850">
    <property type="entry name" value="Periplasmic binding protein-like II"/>
    <property type="match status" value="1"/>
</dbReference>
<dbReference type="PROSITE" id="PS01039">
    <property type="entry name" value="SBP_BACTERIAL_3"/>
    <property type="match status" value="1"/>
</dbReference>
<name>PEB1A_CAMJE</name>
<feature type="signal peptide" evidence="1">
    <location>
        <begin position="1"/>
        <end position="26"/>
    </location>
</feature>
<feature type="chain" id="PRO_0000031772" description="Major cell-binding factor">
    <location>
        <begin position="27"/>
        <end position="259"/>
    </location>
</feature>
<feature type="helix" evidence="3">
    <location>
        <begin position="30"/>
        <end position="37"/>
    </location>
</feature>
<feature type="strand" evidence="3">
    <location>
        <begin position="40"/>
        <end position="44"/>
    </location>
</feature>
<feature type="strand" evidence="3">
    <location>
        <begin position="46"/>
        <end position="48"/>
    </location>
</feature>
<feature type="turn" evidence="3">
    <location>
        <begin position="49"/>
        <end position="51"/>
    </location>
</feature>
<feature type="strand" evidence="3">
    <location>
        <begin position="52"/>
        <end position="54"/>
    </location>
</feature>
<feature type="turn" evidence="3">
    <location>
        <begin position="56"/>
        <end position="58"/>
    </location>
</feature>
<feature type="strand" evidence="3">
    <location>
        <begin position="61"/>
        <end position="63"/>
    </location>
</feature>
<feature type="helix" evidence="3">
    <location>
        <begin position="64"/>
        <end position="77"/>
    </location>
</feature>
<feature type="strand" evidence="3">
    <location>
        <begin position="82"/>
        <end position="87"/>
    </location>
</feature>
<feature type="turn" evidence="3">
    <location>
        <begin position="90"/>
        <end position="92"/>
    </location>
</feature>
<feature type="helix" evidence="3">
    <location>
        <begin position="93"/>
        <end position="98"/>
    </location>
</feature>
<feature type="strand" evidence="3">
    <location>
        <begin position="103"/>
        <end position="105"/>
    </location>
</feature>
<feature type="helix" evidence="3">
    <location>
        <begin position="113"/>
        <end position="116"/>
    </location>
</feature>
<feature type="strand" evidence="3">
    <location>
        <begin position="119"/>
        <end position="121"/>
    </location>
</feature>
<feature type="strand" evidence="3">
    <location>
        <begin position="125"/>
        <end position="135"/>
    </location>
</feature>
<feature type="helix" evidence="3">
    <location>
        <begin position="136"/>
        <end position="138"/>
    </location>
</feature>
<feature type="helix" evidence="3">
    <location>
        <begin position="143"/>
        <end position="145"/>
    </location>
</feature>
<feature type="strand" evidence="3">
    <location>
        <begin position="150"/>
        <end position="154"/>
    </location>
</feature>
<feature type="helix" evidence="3">
    <location>
        <begin position="159"/>
        <end position="169"/>
    </location>
</feature>
<feature type="strand" evidence="3">
    <location>
        <begin position="175"/>
        <end position="181"/>
    </location>
</feature>
<feature type="helix" evidence="3">
    <location>
        <begin position="182"/>
        <end position="190"/>
    </location>
</feature>
<feature type="strand" evidence="3">
    <location>
        <begin position="193"/>
        <end position="200"/>
    </location>
</feature>
<feature type="helix" evidence="3">
    <location>
        <begin position="201"/>
        <end position="204"/>
    </location>
</feature>
<feature type="turn" evidence="3">
    <location>
        <begin position="205"/>
        <end position="207"/>
    </location>
</feature>
<feature type="strand" evidence="3">
    <location>
        <begin position="212"/>
        <end position="214"/>
    </location>
</feature>
<feature type="strand" evidence="3">
    <location>
        <begin position="220"/>
        <end position="224"/>
    </location>
</feature>
<feature type="strand" evidence="3">
    <location>
        <begin position="227"/>
        <end position="229"/>
    </location>
</feature>
<feature type="helix" evidence="3">
    <location>
        <begin position="233"/>
        <end position="245"/>
    </location>
</feature>
<feature type="helix" evidence="3">
    <location>
        <begin position="247"/>
        <end position="256"/>
    </location>
</feature>
<evidence type="ECO:0000269" key="1">
    <source>
    </source>
</evidence>
<evidence type="ECO:0000305" key="2"/>
<evidence type="ECO:0007829" key="3">
    <source>
        <dbReference type="PDB" id="2V25"/>
    </source>
</evidence>
<comment type="function">
    <text>Common antigen and a major cell adherence molecule. Most probably involved, with PEB1C, in a binding-protein-dependent transport system for an amino acid. May be involved in binding to intestinal cells.</text>
</comment>
<comment type="subcellular location">
    <subcellularLocation>
        <location>Cell surface</location>
    </subcellularLocation>
</comment>
<comment type="similarity">
    <text evidence="2">Belongs to the bacterial solute-binding protein 3 family.</text>
</comment>
<reference key="1">
    <citation type="journal article" date="2000" name="Nature">
        <title>The genome sequence of the food-borne pathogen Campylobacter jejuni reveals hypervariable sequences.</title>
        <authorList>
            <person name="Parkhill J."/>
            <person name="Wren B.W."/>
            <person name="Mungall K.L."/>
            <person name="Ketley J.M."/>
            <person name="Churcher C.M."/>
            <person name="Basham D."/>
            <person name="Chillingworth T."/>
            <person name="Davies R.M."/>
            <person name="Feltwell T."/>
            <person name="Holroyd S."/>
            <person name="Jagels K."/>
            <person name="Karlyshev A.V."/>
            <person name="Moule S."/>
            <person name="Pallen M.J."/>
            <person name="Penn C.W."/>
            <person name="Quail M.A."/>
            <person name="Rajandream M.A."/>
            <person name="Rutherford K.M."/>
            <person name="van Vliet A.H.M."/>
            <person name="Whitehead S."/>
            <person name="Barrell B.G."/>
        </authorList>
    </citation>
    <scope>NUCLEOTIDE SEQUENCE [LARGE SCALE GENOMIC DNA]</scope>
    <source>
        <strain>ATCC 700819 / NCTC 11168</strain>
    </source>
</reference>
<reference key="2">
    <citation type="journal article" date="1991" name="J. Biol. Chem.">
        <title>Identification, purification, and characterization of major antigenic proteins of Campylobacter jejuni.</title>
        <authorList>
            <person name="Pei Z."/>
            <person name="Ellison R.T. III"/>
            <person name="Blaser M.J."/>
        </authorList>
    </citation>
    <scope>PROTEIN SEQUENCE OF 27-53</scope>
</reference>
<sequence length="259" mass="28178">MVFRKSLLKLAVFALGACVAFSNANAAEGKLESIKSKGQLIVGVKNDVPHYALLDQATGEIKGFEVDVAKLLAKSILGDDKKIKLVAVNAKTRGPLLDNGSVDAVIATFTITPERKRIYNFSEPYYQDAIGLLVLKEKKYKSLADMKGANIGVAQAATTKKAIGEAAKKIGIDVKFSEFPDYPSIKAALDAKRVDAFSVDKSILLGYVDDKSEILPDSFEPQSYGIVTKKDDPAFAKYVDDFVKEHKNEIDALAKKWGL</sequence>
<proteinExistence type="evidence at protein level"/>
<keyword id="KW-0002">3D-structure</keyword>
<keyword id="KW-0903">Direct protein sequencing</keyword>
<keyword id="KW-1185">Reference proteome</keyword>
<keyword id="KW-0732">Signal</keyword>
<keyword id="KW-0813">Transport</keyword>
<protein>
    <recommendedName>
        <fullName>Major cell-binding factor</fullName>
    </recommendedName>
    <alternativeName>
        <fullName>CBF1</fullName>
    </alternativeName>
    <alternativeName>
        <fullName>PEB1</fullName>
    </alternativeName>
</protein>
<gene>
    <name type="primary">peb1A</name>
    <name type="ordered locus">Cj0921c</name>
</gene>
<organism>
    <name type="scientific">Campylobacter jejuni subsp. jejuni serotype O:2 (strain ATCC 700819 / NCTC 11168)</name>
    <dbReference type="NCBI Taxonomy" id="192222"/>
    <lineage>
        <taxon>Bacteria</taxon>
        <taxon>Pseudomonadati</taxon>
        <taxon>Campylobacterota</taxon>
        <taxon>Epsilonproteobacteria</taxon>
        <taxon>Campylobacterales</taxon>
        <taxon>Campylobacteraceae</taxon>
        <taxon>Campylobacter</taxon>
    </lineage>
</organism>
<accession>Q0P9X8</accession>
<accession>P45678</accession>